<name>CDC20_HUMAN</name>
<comment type="function">
    <text evidence="1 15 18 19 26 27 28">Substrate-specific adapter of the anaphase promoting complex/cyclosome (APC/C) complex that confers substrate specificity by binding to substrates and targeting them to the APC/C complex for ubiquitination and degradation (PubMed:9734353, PubMed:27030811, PubMed:29343641). Recognizes and binds the destruction box (D box) on protein substrates (PubMed:29343641). Involved in the metaphase/anaphase transition of cell cycle (PubMed:32666501). Is regulated by MAD2L1: in metaphase the MAD2L1-CDC20-APC/C ternary complex is inactive and in anaphase the CDC20-APC/C binary complex is active in degrading substrates (PubMed:9811605, PubMed:9637688). The CDC20-APC/C complex positively regulates the formation of synaptic vesicle clustering at active zone to the presynaptic membrane in postmitotic neurons (By similarity). CDC20-APC/C-induced degradation of NEUROD2 induces presynaptic differentiation (By similarity). The CDC20-APC/C complex promotes proper dilation formation and radial migration by degrading CCDC41 (By similarity).</text>
</comment>
<comment type="pathway">
    <text evidence="18">Protein modification; protein ubiquitination.</text>
</comment>
<comment type="subunit">
    <text evidence="1 3 5 6 8 9 10 11 12 14 15 16 17 20 26 27 28">Component of a complex with CDC20, CDC27, SPATC1 and TUBG1 (By similarity). Interacts with NEUROD2 (By similarity). Interacts with dimeric MAD2L1 in its closed conformation form (PubMed:15525512, PubMed:19098431, PubMed:29162720, PubMed:9637688, PubMed:9811605). Interacts with BUB1B (PubMed:15525512, PubMed:18997788, PubMed:19098431, PubMed:33094908). The phosphorylated form interacts with APC/C (PubMed:9637688, PubMed:9734353, PubMed:9811605). Interacts with NINL (PubMed:17403670). May interact with MAD2L2 (PubMed:11459826). Interacts with CDK5RAP2 (PubMed:19282672). Interacts with SIRT2 (PubMed:22014574). Interacts with isoform 1 of NEK2 (PubMed:20034488). Interacts with HSF1 (via phosphorylated form); this interaction occurs in mitosis in a MAD2L1-dependent manner and prevents PLK1-stimulated degradation of HSF1 by blocking the recruitment of the SCF(BTRC) ubiquitin ligase complex (PubMed:18794143). Interacts (via the N-terminal substrate-binding domain) with FBXO5 (By similarity). Interacts with CCNF (PubMed:27653696). Interacts with USP22 (PubMed:27030811).</text>
</comment>
<comment type="interaction">
    <interactant intactId="EBI-367462">
        <id>Q12834</id>
    </interactant>
    <interactant intactId="EBI-2554854">
        <id>Q9UJX5</id>
        <label>ANAPC4</label>
    </interactant>
    <organismsDiffer>false</organismsDiffer>
    <experiments>10</experiments>
</comment>
<comment type="interaction">
    <interactant intactId="EBI-367462">
        <id>Q12834</id>
    </interactant>
    <interactant intactId="EBI-1001438">
        <id>O60566</id>
        <label>BUB1B</label>
    </interactant>
    <organismsDiffer>false</organismsDiffer>
    <experiments>38</experiments>
</comment>
<comment type="interaction">
    <interactant intactId="EBI-367462">
        <id>Q12834</id>
    </interactant>
    <interactant intactId="EBI-994813">
        <id>P30260</id>
        <label>CDC27</label>
    </interactant>
    <organismsDiffer>false</organismsDiffer>
    <experiments>14</experiments>
</comment>
<comment type="interaction">
    <interactant intactId="EBI-367462">
        <id>Q12834</id>
    </interactant>
    <interactant intactId="EBI-78203">
        <id>Q13257</id>
        <label>MAD2L1</label>
    </interactant>
    <organismsDiffer>false</organismsDiffer>
    <experiments>38</experiments>
</comment>
<comment type="interaction">
    <interactant intactId="EBI-367462">
        <id>Q12834</id>
    </interactant>
    <interactant intactId="EBI-77889">
        <id>Q9UI95</id>
        <label>MAD2L2</label>
    </interactant>
    <organismsDiffer>false</organismsDiffer>
    <experiments>2</experiments>
</comment>
<comment type="interaction">
    <interactant intactId="EBI-367462">
        <id>Q12834</id>
    </interactant>
    <interactant intactId="EBI-438698">
        <id>Q9NS23-2</id>
        <label>RASSF1</label>
    </interactant>
    <organismsDiffer>false</organismsDiffer>
    <experiments>2</experiments>
</comment>
<comment type="interaction">
    <interactant intactId="EBI-367462">
        <id>Q12834</id>
    </interactant>
    <interactant intactId="EBI-5240785">
        <id>Q8IXJ6-2</id>
        <label>SIRT2</label>
    </interactant>
    <organismsDiffer>false</organismsDiffer>
    <experiments>2</experiments>
</comment>
<comment type="interaction">
    <interactant intactId="EBI-367462">
        <id>Q12834</id>
    </interactant>
    <interactant intactId="EBI-7690990">
        <id>O88566</id>
        <label>Axin2</label>
    </interactant>
    <organismsDiffer>true</organismsDiffer>
    <experiments>2</experiments>
</comment>
<comment type="subcellular location">
    <subcellularLocation>
        <location evidence="12">Cytoplasm</location>
        <location evidence="12">Cytoskeleton</location>
        <location evidence="12">Microtubule organizing center</location>
        <location evidence="12">Centrosome</location>
    </subcellularLocation>
    <subcellularLocation>
        <location evidence="19 20">Chromosome</location>
        <location evidence="19 20">Centromere</location>
        <location evidence="19 20">Kinetochore</location>
    </subcellularLocation>
    <subcellularLocation>
        <location evidence="12">Cytoplasm</location>
        <location evidence="12">Cytoskeleton</location>
        <location evidence="12">Spindle pole</location>
    </subcellularLocation>
</comment>
<comment type="developmental stage">
    <text>Synthesis is initiated at G1/S, protein level peaks in M phase and protein is abruptly degraded at M/G1 transition.</text>
</comment>
<comment type="PTM">
    <text evidence="14">Acetylated. Deacetylated at Lys-66 by SIRT2; deacetylation enhances the interaction of CDC20 with CDC27, leading to activation of anaphase promoting complex/cyclosome (APC/C).</text>
</comment>
<comment type="PTM">
    <text evidence="4 5 12">Phosphorylated during mitosis (PubMed:14657031). Phosphorylated by BUB1 at Ser-41; Ser-72; Ser-92; Ser-153; Thr-157 and Ser-161 (PubMed:15525512). Phosphorylated by NEK2 (PubMed:20034488).</text>
</comment>
<comment type="PTM">
    <text>Dephosphorylated by CTDP1.</text>
</comment>
<comment type="PTM">
    <text evidence="7 9 10 13 24 25">Ubiquitinated and degraded by the proteasome during spindle assembly checkpoint (PubMed:18997788, PubMed:19098431). Deubiquitinated by USP44, leading to stabilize the MAD2L1-CDC20-APC/C ternary complex, thereby preventing premature activation of the APC/C (PubMed:17443180). Ubiquitinated at Lys-490 during prometaphase (PubMed:21926987). Ubiquitination at Lys-485 and Lys-490 has no effect on its ability to bind the APC/C complex (PubMed:21926987). Ubiquitinated by UBR5 when not assembled in a multiprotein complex, leading to its degradation: UBR5 recognizes and binds a degron that is not accessible when CDC20 is part of a complex (PubMed:35217622, PubMed:37478862).</text>
</comment>
<comment type="disease" evidence="19 21 22 23">
    <disease id="DI-06627">
        <name>Oocyte/zygote/embryo maturation arrest 14</name>
        <acronym>OZEMA14</acronym>
        <description>An autosomal recessive female infertility disorder characterized by oocyte maturation arrest, fertilization failure, and/or early embryonic arrest.</description>
        <dbReference type="MIM" id="620276"/>
    </disease>
    <text>The disease is caused by variants affecting the gene represented in this entry.</text>
</comment>
<comment type="similarity">
    <text evidence="30">Belongs to the WD repeat CDC20/Fizzy family.</text>
</comment>
<comment type="caution">
    <text evidence="31 32">Originally thought to be phosphorylated by MPF during mitosis. However this paper was retracted due to falsification of data.</text>
</comment>
<comment type="online information" name="Atlas of Genetics and Cytogenetics in Oncology and Haematology">
    <link uri="https://atlasgeneticsoncology.org/gene/40003/CDC20"/>
</comment>
<accession>Q12834</accession>
<accession>B2R6Z6</accession>
<accession>D3DPJ1</accession>
<accession>Q5JUY4</accession>
<accession>Q9BW56</accession>
<accession>Q9UQI9</accession>
<keyword id="KW-0002">3D-structure</keyword>
<keyword id="KW-0007">Acetylation</keyword>
<keyword id="KW-0131">Cell cycle</keyword>
<keyword id="KW-0132">Cell division</keyword>
<keyword id="KW-0137">Centromere</keyword>
<keyword id="KW-0158">Chromosome</keyword>
<keyword id="KW-0963">Cytoplasm</keyword>
<keyword id="KW-0206">Cytoskeleton</keyword>
<keyword id="KW-0221">Differentiation</keyword>
<keyword id="KW-0225">Disease variant</keyword>
<keyword id="KW-1017">Isopeptide bond</keyword>
<keyword id="KW-0995">Kinetochore</keyword>
<keyword id="KW-0498">Mitosis</keyword>
<keyword id="KW-0524">Neurogenesis</keyword>
<keyword id="KW-0597">Phosphoprotein</keyword>
<keyword id="KW-1267">Proteomics identification</keyword>
<keyword id="KW-1185">Reference proteome</keyword>
<keyword id="KW-0677">Repeat</keyword>
<keyword id="KW-0832">Ubl conjugation</keyword>
<keyword id="KW-0833">Ubl conjugation pathway</keyword>
<keyword id="KW-0853">WD repeat</keyword>
<proteinExistence type="evidence at protein level"/>
<feature type="chain" id="PRO_0000050900" description="Cell division cycle protein 20 homolog">
    <location>
        <begin position="1"/>
        <end position="499"/>
    </location>
</feature>
<feature type="repeat" description="WD 1">
    <location>
        <begin position="182"/>
        <end position="221"/>
    </location>
</feature>
<feature type="repeat" description="WD 2">
    <location>
        <begin position="224"/>
        <end position="263"/>
    </location>
</feature>
<feature type="repeat" description="WD 3">
    <location>
        <begin position="266"/>
        <end position="303"/>
    </location>
</feature>
<feature type="repeat" description="WD 4">
    <location>
        <begin position="307"/>
        <end position="346"/>
    </location>
</feature>
<feature type="repeat" description="WD 5">
    <location>
        <begin position="353"/>
        <end position="395"/>
    </location>
</feature>
<feature type="repeat" description="WD 6">
    <location>
        <begin position="397"/>
        <end position="438"/>
    </location>
</feature>
<feature type="repeat" description="WD 7">
    <location>
        <begin position="441"/>
        <end position="480"/>
    </location>
</feature>
<feature type="region of interest" description="Disordered" evidence="2">
    <location>
        <begin position="17"/>
        <end position="80"/>
    </location>
</feature>
<feature type="compositionally biased region" description="Polar residues" evidence="2">
    <location>
        <begin position="61"/>
        <end position="72"/>
    </location>
</feature>
<feature type="modified residue" description="Phosphoserine" evidence="5 33">
    <location>
        <position position="41"/>
    </location>
</feature>
<feature type="modified residue" description="N6-acetyllysine" evidence="14">
    <location>
        <position position="66"/>
    </location>
</feature>
<feature type="modified residue" description="Phosphothreonine" evidence="4 33">
    <location>
        <position position="70"/>
    </location>
</feature>
<feature type="modified residue" description="Phosphoserine" evidence="5">
    <location>
        <position position="72"/>
    </location>
</feature>
<feature type="modified residue" description="Phosphoserine" evidence="5">
    <location>
        <position position="92"/>
    </location>
</feature>
<feature type="modified residue" description="Phosphothreonine" evidence="4">
    <location>
        <position position="106"/>
    </location>
</feature>
<feature type="modified residue" description="Phosphoserine" evidence="5">
    <location>
        <position position="153"/>
    </location>
</feature>
<feature type="modified residue" description="Phosphothreonine" evidence="5">
    <location>
        <position position="157"/>
    </location>
</feature>
<feature type="modified residue" description="Phosphoserine" evidence="5">
    <location>
        <position position="161"/>
    </location>
</feature>
<feature type="cross-link" description="Glycyl lysine isopeptide (Lys-Gly) (interchain with G-Cter in ubiquitin)" evidence="13">
    <location>
        <position position="485"/>
    </location>
</feature>
<feature type="cross-link" description="Glycyl lysine isopeptide (Lys-Gly) (interchain with G-Cter in ubiquitin)" evidence="13">
    <location>
        <position position="490"/>
    </location>
</feature>
<feature type="sequence variant" id="VAR_088388" description="In OZEMA14; severely decreased function in metaphase/anaphase transition of meiosis I; does not fully rescue metaphase I arrest in CDC20-knocked down mouse oocytes; decreased function in positive regulation of anaphase-promoting complex-dependent catabolic process; fails to localize to the kinetochore." evidence="19">
    <location>
        <begin position="182"/>
        <end position="499"/>
    </location>
</feature>
<feature type="sequence variant" id="VAR_088389" description="In OZEMA14; uncertain significance." evidence="21">
    <original>A</original>
    <variation>T</variation>
    <location>
        <position position="211"/>
    </location>
</feature>
<feature type="sequence variant" id="VAR_088390" description="In OZEMA14; decreased function in metaphase/anaphase transition of meiosis I; does not fully rescue metaphase I arrest in CDC20-knocked down mouse oocytes; decreased function in positive regulation of anaphase-promoting complex-dependent catabolic process; shows normal kinetochore localization." evidence="19 23">
    <original>Y</original>
    <variation>C</variation>
    <location>
        <position position="228"/>
    </location>
</feature>
<feature type="sequence variant" id="VAR_088391" description="In OZEMA14; dbSNP:rs754957702." evidence="21">
    <location>
        <begin position="262"/>
        <end position="499"/>
    </location>
</feature>
<feature type="sequence variant" id="VAR_088392" description="Found in a patient with mosaic variagated aneuploidy syndrome 1; uncertain significance; decreased interaction with BUB1B during the formation of the mitotic checkpoint complex; shows normal kinetochore localization." evidence="20">
    <original>R</original>
    <variation>S</variation>
    <location>
        <position position="286"/>
    </location>
</feature>
<feature type="sequence variant" id="VAR_088393" description="In OZEMA14; uncertain significance; decreased function in metaphase/anaphase transition of meiosis I; does not fully rescue metaphase I arrest in CDC20-knocked down mouse oocytes; decreased function in positive regulation of anaphase-promoting complex-dependent catabolic process; shows normal kinetochore localization." evidence="22">
    <original>R</original>
    <variation>Q</variation>
    <location>
        <position position="296"/>
    </location>
</feature>
<feature type="sequence variant" id="VAR_088394" description="In OZEMA14; severely decreased function in metaphase/anaphase transition of meiosis I; does not fully rescue metaphase I arrest in CDC20-knocked down mouse oocytes; decreased function in positive regulation of anaphase-promoting complex-dependent catabolic process; fails to localize to the kinetochore." evidence="19 22">
    <location>
        <begin position="322"/>
        <end position="499"/>
    </location>
</feature>
<feature type="sequence variant" id="VAR_088395" description="In OZEMA14; severely decreased function in metaphase/anaphase transition of meiosis I; does not fully rescue metaphase I arrest in CDC20-knocked down mouse oocytes; decreased function in positive regulation of anaphase-promoting complex-dependent catabolic process; shows normal kinetochore localization." evidence="19 22">
    <original>R</original>
    <variation>Q</variation>
    <location>
        <position position="322"/>
    </location>
</feature>
<feature type="sequence variant" id="VAR_088396" description="In OZEMA14; decreased function in metaphase/anaphase transition of meiosis I; does not fully rescue metaphase I arrest in CDC20-knocked down mouse oocytes; slightly decreased function in positive regulation of anaphase-promoting complex-dependent catabolic process; shows normal kinetochore localization." evidence="22">
    <original>W</original>
    <variation>C</variation>
    <location>
        <position position="385"/>
    </location>
</feature>
<feature type="sequence variant" id="VAR_030368" description="In dbSNP:rs45443196." evidence="29">
    <original>V</original>
    <variation>M</variation>
    <location>
        <position position="402"/>
    </location>
</feature>
<feature type="sequence variant" id="VAR_088397" description="In OZEMA14; uncertain significance; decreased function in metaphase/anaphase transition of meiosis I; does not fully rescue metaphase I arrest in CDC20-knocked down mouse oocytes; decreased function in positive regulation of anaphase-promoting complex-dependent catabolic process; shows normal kinetochore localization." evidence="19">
    <original>L</original>
    <variation>R</variation>
    <location>
        <position position="439"/>
    </location>
</feature>
<feature type="sequence variant" id="VAR_030369" description="In dbSNP:rs45461499." evidence="29">
    <original>R</original>
    <variation>Q</variation>
    <location>
        <position position="479"/>
    </location>
</feature>
<feature type="mutagenesis site" description="Loss of BUB1-mediated phosphorylation and inhibition and partially defective spindle-assembly checkpoint; when associated with A-72; A-92; A-153; A-157 and A-161." evidence="5">
    <original>S</original>
    <variation>A</variation>
    <location>
        <position position="41"/>
    </location>
</feature>
<feature type="mutagenesis site" description="Loss of BUB1-mediated phosphorylation and inhibition and partially defective spindle-assembly checkpoint; when associated with A-41; A-92; A-153; A-157 and A-161." evidence="5">
    <original>S</original>
    <variation>A</variation>
    <location>
        <position position="72"/>
    </location>
</feature>
<feature type="mutagenesis site" description="Loss of BUB1-mediated phosphorylation and inhibition and partially defective spindle-assembly checkpoint; when associated with A-41; A-72; A-153; A-157 and A-161." evidence="5">
    <original>S</original>
    <variation>A</variation>
    <location>
        <position position="92"/>
    </location>
</feature>
<feature type="mutagenesis site" description="Loss of interaction with MAD2L1." evidence="10">
    <original>R</original>
    <variation>A</variation>
    <location>
        <position position="132"/>
    </location>
</feature>
<feature type="mutagenesis site" description="Loss of BUB1-mediated phosphorylation and inhibition and partially defective spindle-assembly checkpoint; when associated with A-42; A-72; A-92; A-157 and A-161." evidence="5">
    <original>S</original>
    <variation>A</variation>
    <location>
        <position position="153"/>
    </location>
</feature>
<feature type="mutagenesis site" description="Loss of BUB1-mediated phosphorylation and inhibition and partially defective spindle-assembly checkpoint; when associated with A-42; A-72; A-92; A-153 and A-161." evidence="5">
    <original>T</original>
    <variation>A</variation>
    <location>
        <position position="157"/>
    </location>
</feature>
<feature type="mutagenesis site" description="Loss of BUB1-mediated phosphorylation and inhibition and partially defective spindle-assembly checkpoint; when associated with A-72; A-92; A-153; A-157 and A-161." evidence="5">
    <original>S</original>
    <variation>A</variation>
    <location>
        <position position="161"/>
    </location>
</feature>
<feature type="mutagenesis site" description="Does not affect its ability to bind the APC/C complex; when associated with R-490." evidence="13">
    <original>K</original>
    <variation>R</variation>
    <location>
        <position position="485"/>
    </location>
</feature>
<feature type="mutagenesis site" description="Does not affect its ability to bind the APC/C complex; when associated with R-485." evidence="13">
    <original>K</original>
    <variation>R</variation>
    <location>
        <position position="490"/>
    </location>
</feature>
<feature type="sequence conflict" description="In Ref. 1; AAA19017." evidence="30" ref="1">
    <original>P</original>
    <variation>S</variation>
    <location>
        <position position="101"/>
    </location>
</feature>
<feature type="sequence conflict" description="In Ref. 8; AAH00624." evidence="30" ref="8">
    <original>A</original>
    <variation>V</variation>
    <location>
        <position position="117"/>
    </location>
</feature>
<feature type="strand" evidence="35">
    <location>
        <begin position="78"/>
        <end position="80"/>
    </location>
</feature>
<feature type="helix" evidence="35">
    <location>
        <begin position="85"/>
        <end position="96"/>
    </location>
</feature>
<feature type="turn" evidence="35">
    <location>
        <begin position="97"/>
        <end position="99"/>
    </location>
</feature>
<feature type="helix" evidence="35">
    <location>
        <begin position="107"/>
        <end position="120"/>
    </location>
</feature>
<feature type="strand" evidence="35">
    <location>
        <begin position="121"/>
        <end position="123"/>
    </location>
</feature>
<feature type="helix" evidence="35">
    <location>
        <begin position="125"/>
        <end position="127"/>
    </location>
</feature>
<feature type="strand" evidence="34">
    <location>
        <begin position="173"/>
        <end position="177"/>
    </location>
</feature>
<feature type="strand" evidence="34">
    <location>
        <begin position="190"/>
        <end position="192"/>
    </location>
</feature>
<feature type="strand" evidence="34">
    <location>
        <begin position="196"/>
        <end position="202"/>
    </location>
</feature>
<feature type="strand" evidence="34">
    <location>
        <begin position="205"/>
        <end position="210"/>
    </location>
</feature>
<feature type="turn" evidence="34">
    <location>
        <begin position="211"/>
        <end position="213"/>
    </location>
</feature>
<feature type="strand" evidence="34">
    <location>
        <begin position="216"/>
        <end position="221"/>
    </location>
</feature>
<feature type="strand" evidence="35">
    <location>
        <begin position="224"/>
        <end position="226"/>
    </location>
</feature>
<feature type="strand" evidence="34">
    <location>
        <begin position="229"/>
        <end position="234"/>
    </location>
</feature>
<feature type="strand" evidence="34">
    <location>
        <begin position="238"/>
        <end position="245"/>
    </location>
</feature>
<feature type="strand" evidence="34">
    <location>
        <begin position="248"/>
        <end position="254"/>
    </location>
</feature>
<feature type="turn" evidence="34">
    <location>
        <begin position="255"/>
        <end position="258"/>
    </location>
</feature>
<feature type="strand" evidence="34">
    <location>
        <begin position="259"/>
        <end position="265"/>
    </location>
</feature>
<feature type="strand" evidence="34">
    <location>
        <begin position="271"/>
        <end position="277"/>
    </location>
</feature>
<feature type="strand" evidence="34">
    <location>
        <begin position="280"/>
        <end position="285"/>
    </location>
</feature>
<feature type="strand" evidence="34">
    <location>
        <begin position="288"/>
        <end position="294"/>
    </location>
</feature>
<feature type="strand" evidence="34">
    <location>
        <begin position="297"/>
        <end position="299"/>
    </location>
</feature>
<feature type="strand" evidence="34">
    <location>
        <begin position="301"/>
        <end position="306"/>
    </location>
</feature>
<feature type="strand" evidence="34">
    <location>
        <begin position="312"/>
        <end position="317"/>
    </location>
</feature>
<feature type="strand" evidence="34">
    <location>
        <begin position="321"/>
        <end position="328"/>
    </location>
</feature>
<feature type="strand" evidence="34">
    <location>
        <begin position="333"/>
        <end position="339"/>
    </location>
</feature>
<feature type="strand" evidence="35">
    <location>
        <begin position="342"/>
        <end position="345"/>
    </location>
</feature>
<feature type="strand" evidence="34">
    <location>
        <begin position="348"/>
        <end position="351"/>
    </location>
</feature>
<feature type="strand" evidence="34">
    <location>
        <begin position="358"/>
        <end position="363"/>
    </location>
</feature>
<feature type="strand" evidence="36">
    <location>
        <begin position="365"/>
        <end position="367"/>
    </location>
</feature>
<feature type="strand" evidence="34">
    <location>
        <begin position="370"/>
        <end position="375"/>
    </location>
</feature>
<feature type="turn" evidence="34">
    <location>
        <begin position="377"/>
        <end position="379"/>
    </location>
</feature>
<feature type="strand" evidence="34">
    <location>
        <begin position="381"/>
        <end position="386"/>
    </location>
</feature>
<feature type="turn" evidence="34">
    <location>
        <begin position="387"/>
        <end position="389"/>
    </location>
</feature>
<feature type="strand" evidence="34">
    <location>
        <begin position="392"/>
        <end position="397"/>
    </location>
</feature>
<feature type="strand" evidence="34">
    <location>
        <begin position="402"/>
        <end position="408"/>
    </location>
</feature>
<feature type="turn" evidence="34">
    <location>
        <begin position="409"/>
        <end position="412"/>
    </location>
</feature>
<feature type="strand" evidence="34">
    <location>
        <begin position="413"/>
        <end position="418"/>
    </location>
</feature>
<feature type="turn" evidence="34">
    <location>
        <begin position="420"/>
        <end position="422"/>
    </location>
</feature>
<feature type="strand" evidence="34">
    <location>
        <begin position="425"/>
        <end position="429"/>
    </location>
</feature>
<feature type="turn" evidence="34">
    <location>
        <begin position="430"/>
        <end position="432"/>
    </location>
</feature>
<feature type="strand" evidence="34">
    <location>
        <begin position="435"/>
        <end position="439"/>
    </location>
</feature>
<feature type="strand" evidence="34">
    <location>
        <begin position="446"/>
        <end position="451"/>
    </location>
</feature>
<feature type="strand" evidence="35">
    <location>
        <begin position="453"/>
        <end position="455"/>
    </location>
</feature>
<feature type="strand" evidence="34">
    <location>
        <begin position="458"/>
        <end position="462"/>
    </location>
</feature>
<feature type="turn" evidence="34">
    <location>
        <begin position="463"/>
        <end position="465"/>
    </location>
</feature>
<feature type="strand" evidence="34">
    <location>
        <begin position="466"/>
        <end position="470"/>
    </location>
</feature>
<gene>
    <name type="primary">CDC20</name>
</gene>
<dbReference type="EMBL" id="U05340">
    <property type="protein sequence ID" value="AAA19017.1"/>
    <property type="molecule type" value="mRNA"/>
</dbReference>
<dbReference type="EMBL" id="AF099644">
    <property type="protein sequence ID" value="AAD16405.1"/>
    <property type="molecule type" value="mRNA"/>
</dbReference>
<dbReference type="EMBL" id="AK312780">
    <property type="protein sequence ID" value="BAG35643.1"/>
    <property type="molecule type" value="mRNA"/>
</dbReference>
<dbReference type="EMBL" id="BT007388">
    <property type="protein sequence ID" value="AAP36052.1"/>
    <property type="molecule type" value="mRNA"/>
</dbReference>
<dbReference type="EMBL" id="DQ473545">
    <property type="protein sequence ID" value="ABE96834.1"/>
    <property type="molecule type" value="Genomic_DNA"/>
</dbReference>
<dbReference type="EMBL" id="AL139289">
    <property type="status" value="NOT_ANNOTATED_CDS"/>
    <property type="molecule type" value="Genomic_DNA"/>
</dbReference>
<dbReference type="EMBL" id="CH471059">
    <property type="protein sequence ID" value="EAX07101.1"/>
    <property type="molecule type" value="Genomic_DNA"/>
</dbReference>
<dbReference type="EMBL" id="CH471059">
    <property type="protein sequence ID" value="EAX07102.1"/>
    <property type="molecule type" value="Genomic_DNA"/>
</dbReference>
<dbReference type="EMBL" id="BC000624">
    <property type="protein sequence ID" value="AAH00624.1"/>
    <property type="molecule type" value="mRNA"/>
</dbReference>
<dbReference type="EMBL" id="BC001088">
    <property type="protein sequence ID" value="AAH01088.1"/>
    <property type="molecule type" value="mRNA"/>
</dbReference>
<dbReference type="EMBL" id="BC006272">
    <property type="protein sequence ID" value="AAH06272.1"/>
    <property type="molecule type" value="mRNA"/>
</dbReference>
<dbReference type="EMBL" id="BC009425">
    <property type="protein sequence ID" value="AAH09425.1"/>
    <property type="molecule type" value="mRNA"/>
</dbReference>
<dbReference type="EMBL" id="BC009426">
    <property type="protein sequence ID" value="AAH09426.1"/>
    <property type="molecule type" value="mRNA"/>
</dbReference>
<dbReference type="EMBL" id="BC010044">
    <property type="protein sequence ID" value="AAH10044.1"/>
    <property type="molecule type" value="mRNA"/>
</dbReference>
<dbReference type="EMBL" id="BC012803">
    <property type="protein sequence ID" value="AAH12803.1"/>
    <property type="molecule type" value="mRNA"/>
</dbReference>
<dbReference type="EMBL" id="BC012827">
    <property type="protein sequence ID" value="AAH12827.1"/>
    <property type="molecule type" value="mRNA"/>
</dbReference>
<dbReference type="EMBL" id="BC013303">
    <property type="protein sequence ID" value="AAH13303.1"/>
    <property type="molecule type" value="mRNA"/>
</dbReference>
<dbReference type="EMBL" id="BC015998">
    <property type="protein sequence ID" value="AAH15998.1"/>
    <property type="molecule type" value="mRNA"/>
</dbReference>
<dbReference type="EMBL" id="BC024257">
    <property type="protein sequence ID" value="AAH24257.1"/>
    <property type="molecule type" value="mRNA"/>
</dbReference>
<dbReference type="EMBL" id="BC031294">
    <property type="protein sequence ID" value="AAH31294.1"/>
    <property type="molecule type" value="mRNA"/>
</dbReference>
<dbReference type="EMBL" id="BC110321">
    <property type="protein sequence ID" value="AAI10322.1"/>
    <property type="molecule type" value="mRNA"/>
</dbReference>
<dbReference type="CCDS" id="CCDS484.1"/>
<dbReference type="PIR" id="A56021">
    <property type="entry name" value="A56021"/>
</dbReference>
<dbReference type="RefSeq" id="NP_001246.2">
    <property type="nucleotide sequence ID" value="NM_001255.3"/>
</dbReference>
<dbReference type="PDB" id="4GGA">
    <property type="method" value="X-ray"/>
    <property type="resolution" value="2.04 A"/>
    <property type="chains" value="A=81-499"/>
</dbReference>
<dbReference type="PDB" id="4GGC">
    <property type="method" value="X-ray"/>
    <property type="resolution" value="1.35 A"/>
    <property type="chains" value="A=161-477"/>
</dbReference>
<dbReference type="PDB" id="4GGD">
    <property type="method" value="X-ray"/>
    <property type="resolution" value="2.44 A"/>
    <property type="chains" value="A/B=71-499"/>
</dbReference>
<dbReference type="PDB" id="4N14">
    <property type="method" value="X-ray"/>
    <property type="resolution" value="2.10 A"/>
    <property type="chains" value="A=165-477"/>
</dbReference>
<dbReference type="PDB" id="5G04">
    <property type="method" value="EM"/>
    <property type="resolution" value="4.00 A"/>
    <property type="chains" value="R=1-499"/>
</dbReference>
<dbReference type="PDB" id="5KHR">
    <property type="method" value="EM"/>
    <property type="resolution" value="6.10 A"/>
    <property type="chains" value="R=1-499"/>
</dbReference>
<dbReference type="PDB" id="5KHU">
    <property type="method" value="EM"/>
    <property type="resolution" value="4.80 A"/>
    <property type="chains" value="R/S=1-499"/>
</dbReference>
<dbReference type="PDB" id="5LCW">
    <property type="method" value="EM"/>
    <property type="resolution" value="4.00 A"/>
    <property type="chains" value="Q=126-499, R=1-499"/>
</dbReference>
<dbReference type="PDB" id="6F0X">
    <property type="method" value="EM"/>
    <property type="resolution" value="4.60 A"/>
    <property type="chains" value="Q=1-499"/>
</dbReference>
<dbReference type="PDB" id="6Q6G">
    <property type="method" value="EM"/>
    <property type="resolution" value="3.20 A"/>
    <property type="chains" value="R=1-499"/>
</dbReference>
<dbReference type="PDB" id="6Q6H">
    <property type="method" value="EM"/>
    <property type="resolution" value="3.20 A"/>
    <property type="chains" value="R=1-499"/>
</dbReference>
<dbReference type="PDB" id="9I68">
    <property type="method" value="X-ray"/>
    <property type="resolution" value="1.50 A"/>
    <property type="chains" value="A=1-499"/>
</dbReference>
<dbReference type="PDB" id="9I69">
    <property type="method" value="X-ray"/>
    <property type="resolution" value="1.46 A"/>
    <property type="chains" value="A=1-499"/>
</dbReference>
<dbReference type="PDB" id="9I6A">
    <property type="method" value="X-ray"/>
    <property type="resolution" value="1.92 A"/>
    <property type="chains" value="A=1-499"/>
</dbReference>
<dbReference type="PDBsum" id="4GGA"/>
<dbReference type="PDBsum" id="4GGC"/>
<dbReference type="PDBsum" id="4GGD"/>
<dbReference type="PDBsum" id="4N14"/>
<dbReference type="PDBsum" id="5G04"/>
<dbReference type="PDBsum" id="5KHR"/>
<dbReference type="PDBsum" id="5KHU"/>
<dbReference type="PDBsum" id="5LCW"/>
<dbReference type="PDBsum" id="6F0X"/>
<dbReference type="PDBsum" id="6Q6G"/>
<dbReference type="PDBsum" id="6Q6H"/>
<dbReference type="PDBsum" id="9I68"/>
<dbReference type="PDBsum" id="9I69"/>
<dbReference type="PDBsum" id="9I6A"/>
<dbReference type="EMDB" id="EMD-10516"/>
<dbReference type="EMDB" id="EMD-3385"/>
<dbReference type="EMDB" id="EMD-4037"/>
<dbReference type="EMDB" id="EMD-4166"/>
<dbReference type="EMDB" id="EMD-4465"/>
<dbReference type="EMDB" id="EMD-4466"/>
<dbReference type="EMDB" id="EMD-4467"/>
<dbReference type="SMR" id="Q12834"/>
<dbReference type="BioGRID" id="107427">
    <property type="interactions" value="256"/>
</dbReference>
<dbReference type="ComplexPortal" id="CPX-3946">
    <property type="entry name" value="Mitotic Checkpoint Complex"/>
</dbReference>
<dbReference type="ComplexPortal" id="CPX-6087">
    <property type="entry name" value="Anaphase-promoting complex, CDC20 variant"/>
</dbReference>
<dbReference type="CORUM" id="Q12834"/>
<dbReference type="DIP" id="DIP-29655N"/>
<dbReference type="ELM" id="Q12834"/>
<dbReference type="FunCoup" id="Q12834">
    <property type="interactions" value="2076"/>
</dbReference>
<dbReference type="IntAct" id="Q12834">
    <property type="interactions" value="83"/>
</dbReference>
<dbReference type="MINT" id="Q12834"/>
<dbReference type="STRING" id="9606.ENSP00000361540"/>
<dbReference type="BindingDB" id="Q12834"/>
<dbReference type="ChEMBL" id="CHEMBL4523283"/>
<dbReference type="TCDB" id="8.A.92.1.14">
    <property type="family name" value="the g-protein AlphaBetaGama complex (gpc) family"/>
</dbReference>
<dbReference type="GlyGen" id="Q12834">
    <property type="glycosylation" value="1 site, 1 O-linked glycan (1 site)"/>
</dbReference>
<dbReference type="iPTMnet" id="Q12834"/>
<dbReference type="PhosphoSitePlus" id="Q12834"/>
<dbReference type="SwissPalm" id="Q12834"/>
<dbReference type="BioMuta" id="CDC20"/>
<dbReference type="DMDM" id="37537762"/>
<dbReference type="jPOST" id="Q12834"/>
<dbReference type="MassIVE" id="Q12834"/>
<dbReference type="PaxDb" id="9606-ENSP00000361540"/>
<dbReference type="PeptideAtlas" id="Q12834"/>
<dbReference type="ProteomicsDB" id="58976"/>
<dbReference type="Pumba" id="Q12834"/>
<dbReference type="Antibodypedia" id="3864">
    <property type="antibodies" value="727 antibodies from 38 providers"/>
</dbReference>
<dbReference type="DNASU" id="991"/>
<dbReference type="Ensembl" id="ENST00000310955.11">
    <property type="protein sequence ID" value="ENSP00000308450.5"/>
    <property type="gene ID" value="ENSG00000117399.14"/>
</dbReference>
<dbReference type="Ensembl" id="ENST00000372462.1">
    <property type="protein sequence ID" value="ENSP00000361540.1"/>
    <property type="gene ID" value="ENSG00000117399.14"/>
</dbReference>
<dbReference type="GeneID" id="991"/>
<dbReference type="KEGG" id="hsa:991"/>
<dbReference type="MANE-Select" id="ENST00000310955.11">
    <property type="protein sequence ID" value="ENSP00000308450.5"/>
    <property type="RefSeq nucleotide sequence ID" value="NM_001255.3"/>
    <property type="RefSeq protein sequence ID" value="NP_001246.2"/>
</dbReference>
<dbReference type="UCSC" id="uc001cix.4">
    <property type="organism name" value="human"/>
</dbReference>
<dbReference type="AGR" id="HGNC:1723"/>
<dbReference type="CTD" id="991"/>
<dbReference type="DisGeNET" id="991"/>
<dbReference type="GeneCards" id="CDC20"/>
<dbReference type="HGNC" id="HGNC:1723">
    <property type="gene designation" value="CDC20"/>
</dbReference>
<dbReference type="HPA" id="ENSG00000117399">
    <property type="expression patterns" value="Tissue enhanced (bone marrow, lymphoid tissue, testis)"/>
</dbReference>
<dbReference type="MalaCards" id="CDC20"/>
<dbReference type="MIM" id="603618">
    <property type="type" value="gene"/>
</dbReference>
<dbReference type="MIM" id="620276">
    <property type="type" value="phenotype"/>
</dbReference>
<dbReference type="neXtProt" id="NX_Q12834"/>
<dbReference type="OpenTargets" id="ENSG00000117399"/>
<dbReference type="PharmGKB" id="PA26257"/>
<dbReference type="VEuPathDB" id="HostDB:ENSG00000117399"/>
<dbReference type="eggNOG" id="KOG0305">
    <property type="taxonomic scope" value="Eukaryota"/>
</dbReference>
<dbReference type="GeneTree" id="ENSGT00950000183104"/>
<dbReference type="HOGENOM" id="CLU_014831_6_1_1"/>
<dbReference type="InParanoid" id="Q12834"/>
<dbReference type="OMA" id="CSGACLN"/>
<dbReference type="OrthoDB" id="10263272at2759"/>
<dbReference type="PAN-GO" id="Q12834">
    <property type="GO annotations" value="5 GO annotations based on evolutionary models"/>
</dbReference>
<dbReference type="PhylomeDB" id="Q12834"/>
<dbReference type="TreeFam" id="TF101065"/>
<dbReference type="PathwayCommons" id="Q12834"/>
<dbReference type="Reactome" id="R-HSA-141405">
    <property type="pathway name" value="Inhibition of the proteolytic activity of APC/C required for the onset of anaphase by mitotic spindle checkpoint components"/>
</dbReference>
<dbReference type="Reactome" id="R-HSA-141430">
    <property type="pathway name" value="Inactivation of APC/C via direct inhibition of the APC/C complex"/>
</dbReference>
<dbReference type="Reactome" id="R-HSA-141444">
    <property type="pathway name" value="Amplification of signal from unattached kinetochores via a MAD2 inhibitory signal"/>
</dbReference>
<dbReference type="Reactome" id="R-HSA-174048">
    <property type="pathway name" value="APC/C:Cdc20 mediated degradation of Cyclin B"/>
</dbReference>
<dbReference type="Reactome" id="R-HSA-174113">
    <property type="pathway name" value="SCF-beta-TrCP mediated degradation of Emi1"/>
</dbReference>
<dbReference type="Reactome" id="R-HSA-174154">
    <property type="pathway name" value="APC/C:Cdc20 mediated degradation of Securin"/>
</dbReference>
<dbReference type="Reactome" id="R-HSA-174178">
    <property type="pathway name" value="APC/C:Cdh1 mediated degradation of Cdc20 and other APC/C:Cdh1 targeted proteins in late mitosis/early G1"/>
</dbReference>
<dbReference type="Reactome" id="R-HSA-174184">
    <property type="pathway name" value="Cdc20:Phospho-APC/C mediated degradation of Cyclin A"/>
</dbReference>
<dbReference type="Reactome" id="R-HSA-176407">
    <property type="pathway name" value="Conversion from APC/C:Cdc20 to APC/C:Cdh1 in late anaphase"/>
</dbReference>
<dbReference type="Reactome" id="R-HSA-176408">
    <property type="pathway name" value="Regulation of APC/C activators between G1/S and early anaphase"/>
</dbReference>
<dbReference type="Reactome" id="R-HSA-176409">
    <property type="pathway name" value="APC/C:Cdc20 mediated degradation of mitotic proteins"/>
</dbReference>
<dbReference type="Reactome" id="R-HSA-176417">
    <property type="pathway name" value="Phosphorylation of Emi1"/>
</dbReference>
<dbReference type="Reactome" id="R-HSA-179409">
    <property type="pathway name" value="APC-Cdc20 mediated degradation of Nek2A"/>
</dbReference>
<dbReference type="Reactome" id="R-HSA-2467813">
    <property type="pathway name" value="Separation of Sister Chromatids"/>
</dbReference>
<dbReference type="Reactome" id="R-HSA-2500257">
    <property type="pathway name" value="Resolution of Sister Chromatid Cohesion"/>
</dbReference>
<dbReference type="Reactome" id="R-HSA-5663220">
    <property type="pathway name" value="RHO GTPases Activate Formins"/>
</dbReference>
<dbReference type="Reactome" id="R-HSA-5689880">
    <property type="pathway name" value="Ub-specific processing proteases"/>
</dbReference>
<dbReference type="Reactome" id="R-HSA-68877">
    <property type="pathway name" value="Mitotic Prometaphase"/>
</dbReference>
<dbReference type="Reactome" id="R-HSA-9648025">
    <property type="pathway name" value="EML4 and NUDC in mitotic spindle formation"/>
</dbReference>
<dbReference type="Reactome" id="R-HSA-983168">
    <property type="pathway name" value="Antigen processing: Ubiquitination &amp; Proteasome degradation"/>
</dbReference>
<dbReference type="SignaLink" id="Q12834"/>
<dbReference type="SIGNOR" id="Q12834"/>
<dbReference type="UniPathway" id="UPA00143"/>
<dbReference type="BioGRID-ORCS" id="991">
    <property type="hits" value="845 hits in 1188 CRISPR screens"/>
</dbReference>
<dbReference type="CD-CODE" id="8C2F96ED">
    <property type="entry name" value="Centrosome"/>
</dbReference>
<dbReference type="ChiTaRS" id="CDC20">
    <property type="organism name" value="human"/>
</dbReference>
<dbReference type="EvolutionaryTrace" id="Q12834"/>
<dbReference type="GeneWiki" id="CDC20"/>
<dbReference type="GenomeRNAi" id="991"/>
<dbReference type="Pharos" id="Q12834">
    <property type="development level" value="Tbio"/>
</dbReference>
<dbReference type="PRO" id="PR:Q12834"/>
<dbReference type="Proteomes" id="UP000005640">
    <property type="component" value="Chromosome 1"/>
</dbReference>
<dbReference type="RNAct" id="Q12834">
    <property type="molecule type" value="protein"/>
</dbReference>
<dbReference type="Bgee" id="ENSG00000117399">
    <property type="expression patterns" value="Expressed in oocyte and 139 other cell types or tissues"/>
</dbReference>
<dbReference type="GO" id="GO:0005680">
    <property type="term" value="C:anaphase-promoting complex"/>
    <property type="evidence" value="ECO:0000314"/>
    <property type="project" value="UniProt"/>
</dbReference>
<dbReference type="GO" id="GO:0005813">
    <property type="term" value="C:centrosome"/>
    <property type="evidence" value="ECO:0007669"/>
    <property type="project" value="UniProtKB-SubCell"/>
</dbReference>
<dbReference type="GO" id="GO:0005829">
    <property type="term" value="C:cytosol"/>
    <property type="evidence" value="ECO:0000314"/>
    <property type="project" value="HPA"/>
</dbReference>
<dbReference type="GO" id="GO:0000776">
    <property type="term" value="C:kinetochore"/>
    <property type="evidence" value="ECO:0000250"/>
    <property type="project" value="UniProtKB"/>
</dbReference>
<dbReference type="GO" id="GO:0033597">
    <property type="term" value="C:mitotic checkpoint complex"/>
    <property type="evidence" value="ECO:0000353"/>
    <property type="project" value="ComplexPortal"/>
</dbReference>
<dbReference type="GO" id="GO:0005654">
    <property type="term" value="C:nucleoplasm"/>
    <property type="evidence" value="ECO:0000314"/>
    <property type="project" value="HPA"/>
</dbReference>
<dbReference type="GO" id="GO:0048471">
    <property type="term" value="C:perinuclear region of cytoplasm"/>
    <property type="evidence" value="ECO:0007669"/>
    <property type="project" value="Ensembl"/>
</dbReference>
<dbReference type="GO" id="GO:0005819">
    <property type="term" value="C:spindle"/>
    <property type="evidence" value="ECO:0000304"/>
    <property type="project" value="ProtInc"/>
</dbReference>
<dbReference type="GO" id="GO:0000922">
    <property type="term" value="C:spindle pole"/>
    <property type="evidence" value="ECO:0007669"/>
    <property type="project" value="UniProtKB-SubCell"/>
</dbReference>
<dbReference type="GO" id="GO:0010997">
    <property type="term" value="F:anaphase-promoting complex binding"/>
    <property type="evidence" value="ECO:0000314"/>
    <property type="project" value="UniProt"/>
</dbReference>
<dbReference type="GO" id="GO:0042826">
    <property type="term" value="F:histone deacetylase binding"/>
    <property type="evidence" value="ECO:0007669"/>
    <property type="project" value="Ensembl"/>
</dbReference>
<dbReference type="GO" id="GO:1990757">
    <property type="term" value="F:ubiquitin ligase activator activity"/>
    <property type="evidence" value="ECO:0000318"/>
    <property type="project" value="GO_Central"/>
</dbReference>
<dbReference type="GO" id="GO:1990756">
    <property type="term" value="F:ubiquitin-like ligase-substrate adaptor activity"/>
    <property type="evidence" value="ECO:0000314"/>
    <property type="project" value="UniProtKB"/>
</dbReference>
<dbReference type="GO" id="GO:0031145">
    <property type="term" value="P:anaphase-promoting complex-dependent catabolic process"/>
    <property type="evidence" value="ECO:0000314"/>
    <property type="project" value="UniProtKB"/>
</dbReference>
<dbReference type="GO" id="GO:0030154">
    <property type="term" value="P:cell differentiation"/>
    <property type="evidence" value="ECO:0007669"/>
    <property type="project" value="UniProtKB-KW"/>
</dbReference>
<dbReference type="GO" id="GO:0051301">
    <property type="term" value="P:cell division"/>
    <property type="evidence" value="ECO:0007669"/>
    <property type="project" value="UniProtKB-KW"/>
</dbReference>
<dbReference type="GO" id="GO:0044784">
    <property type="term" value="P:metaphase/anaphase transition of cell cycle"/>
    <property type="evidence" value="ECO:0000250"/>
    <property type="project" value="UniProtKB"/>
</dbReference>
<dbReference type="GO" id="GO:1990949">
    <property type="term" value="P:metaphase/anaphase transition of meiosis I"/>
    <property type="evidence" value="ECO:0000315"/>
    <property type="project" value="UniProtKB"/>
</dbReference>
<dbReference type="GO" id="GO:0007064">
    <property type="term" value="P:mitotic sister chromatid cohesion"/>
    <property type="evidence" value="ECO:0007669"/>
    <property type="project" value="Ensembl"/>
</dbReference>
<dbReference type="GO" id="GO:0090307">
    <property type="term" value="P:mitotic spindle assembly"/>
    <property type="evidence" value="ECO:0007669"/>
    <property type="project" value="Ensembl"/>
</dbReference>
<dbReference type="GO" id="GO:0007094">
    <property type="term" value="P:mitotic spindle assembly checkpoint signaling"/>
    <property type="evidence" value="ECO:0000303"/>
    <property type="project" value="ComplexPortal"/>
</dbReference>
<dbReference type="GO" id="GO:0007399">
    <property type="term" value="P:nervous system development"/>
    <property type="evidence" value="ECO:0007669"/>
    <property type="project" value="UniProtKB-KW"/>
</dbReference>
<dbReference type="GO" id="GO:1905786">
    <property type="term" value="P:positive regulation of anaphase-promoting complex-dependent catabolic process"/>
    <property type="evidence" value="ECO:0000318"/>
    <property type="project" value="GO_Central"/>
</dbReference>
<dbReference type="GO" id="GO:0008284">
    <property type="term" value="P:positive regulation of cell population proliferation"/>
    <property type="evidence" value="ECO:0007669"/>
    <property type="project" value="Ensembl"/>
</dbReference>
<dbReference type="GO" id="GO:0045842">
    <property type="term" value="P:positive regulation of mitotic metaphase/anaphase transition"/>
    <property type="evidence" value="ECO:0000314"/>
    <property type="project" value="UniProt"/>
</dbReference>
<dbReference type="GO" id="GO:0090129">
    <property type="term" value="P:positive regulation of synapse maturation"/>
    <property type="evidence" value="ECO:0000250"/>
    <property type="project" value="UniProtKB"/>
</dbReference>
<dbReference type="GO" id="GO:0031915">
    <property type="term" value="P:positive regulation of synaptic plasticity"/>
    <property type="evidence" value="ECO:0000250"/>
    <property type="project" value="UniProtKB"/>
</dbReference>
<dbReference type="GO" id="GO:1904668">
    <property type="term" value="P:positive regulation of ubiquitin protein ligase activity"/>
    <property type="evidence" value="ECO:0000314"/>
    <property type="project" value="UniProtKB"/>
</dbReference>
<dbReference type="GO" id="GO:0016567">
    <property type="term" value="P:protein ubiquitination"/>
    <property type="evidence" value="ECO:0007669"/>
    <property type="project" value="UniProtKB-UniPathway"/>
</dbReference>
<dbReference type="GO" id="GO:0050773">
    <property type="term" value="P:regulation of dendrite development"/>
    <property type="evidence" value="ECO:0007669"/>
    <property type="project" value="Ensembl"/>
</dbReference>
<dbReference type="GO" id="GO:0051445">
    <property type="term" value="P:regulation of meiotic cell cycle"/>
    <property type="evidence" value="ECO:0000303"/>
    <property type="project" value="ComplexPortal"/>
</dbReference>
<dbReference type="GO" id="GO:0040020">
    <property type="term" value="P:regulation of meiotic nuclear division"/>
    <property type="evidence" value="ECO:0007669"/>
    <property type="project" value="Ensembl"/>
</dbReference>
<dbReference type="GO" id="GO:0007346">
    <property type="term" value="P:regulation of mitotic cell cycle"/>
    <property type="evidence" value="ECO:0000303"/>
    <property type="project" value="ComplexPortal"/>
</dbReference>
<dbReference type="CDD" id="cd00200">
    <property type="entry name" value="WD40"/>
    <property type="match status" value="1"/>
</dbReference>
<dbReference type="DisProt" id="DP01118"/>
<dbReference type="FunFam" id="2.130.10.10:FF:000224">
    <property type="entry name" value="cell division cycle protein 20 homolog"/>
    <property type="match status" value="1"/>
</dbReference>
<dbReference type="Gene3D" id="2.130.10.10">
    <property type="entry name" value="YVTN repeat-like/Quinoprotein amine dehydrogenase"/>
    <property type="match status" value="1"/>
</dbReference>
<dbReference type="InterPro" id="IPR033010">
    <property type="entry name" value="Cdc20/Fizzy"/>
</dbReference>
<dbReference type="InterPro" id="IPR015943">
    <property type="entry name" value="WD40/YVTN_repeat-like_dom_sf"/>
</dbReference>
<dbReference type="InterPro" id="IPR056150">
    <property type="entry name" value="WD40_CDC20-Fz"/>
</dbReference>
<dbReference type="InterPro" id="IPR036322">
    <property type="entry name" value="WD40_repeat_dom_sf"/>
</dbReference>
<dbReference type="InterPro" id="IPR001680">
    <property type="entry name" value="WD40_rpt"/>
</dbReference>
<dbReference type="PANTHER" id="PTHR19918">
    <property type="entry name" value="CELL DIVISION CYCLE 20 CDC20 FIZZY -RELATED"/>
    <property type="match status" value="1"/>
</dbReference>
<dbReference type="PANTHER" id="PTHR19918:SF3">
    <property type="entry name" value="CELL DIVISION CYCLE PROTEIN 20 HOMOLOG"/>
    <property type="match status" value="1"/>
</dbReference>
<dbReference type="Pfam" id="PF24807">
    <property type="entry name" value="WD40_CDC20-Fz"/>
    <property type="match status" value="1"/>
</dbReference>
<dbReference type="SMART" id="SM00320">
    <property type="entry name" value="WD40"/>
    <property type="match status" value="7"/>
</dbReference>
<dbReference type="SUPFAM" id="SSF50978">
    <property type="entry name" value="WD40 repeat-like"/>
    <property type="match status" value="1"/>
</dbReference>
<dbReference type="PROSITE" id="PS00678">
    <property type="entry name" value="WD_REPEATS_1"/>
    <property type="match status" value="1"/>
</dbReference>
<dbReference type="PROSITE" id="PS50082">
    <property type="entry name" value="WD_REPEATS_2"/>
    <property type="match status" value="3"/>
</dbReference>
<dbReference type="PROSITE" id="PS50294">
    <property type="entry name" value="WD_REPEATS_REGION"/>
    <property type="match status" value="1"/>
</dbReference>
<protein>
    <recommendedName>
        <fullName>Cell division cycle protein 20 homolog</fullName>
    </recommendedName>
    <alternativeName>
        <fullName>p55CDC</fullName>
    </alternativeName>
</protein>
<evidence type="ECO:0000250" key="1">
    <source>
        <dbReference type="UniProtKB" id="Q9JJ66"/>
    </source>
</evidence>
<evidence type="ECO:0000256" key="2">
    <source>
        <dbReference type="SAM" id="MobiDB-lite"/>
    </source>
</evidence>
<evidence type="ECO:0000269" key="3">
    <source>
    </source>
</evidence>
<evidence type="ECO:0000269" key="4">
    <source>
    </source>
</evidence>
<evidence type="ECO:0000269" key="5">
    <source>
    </source>
</evidence>
<evidence type="ECO:0000269" key="6">
    <source>
    </source>
</evidence>
<evidence type="ECO:0000269" key="7">
    <source>
    </source>
</evidence>
<evidence type="ECO:0000269" key="8">
    <source>
    </source>
</evidence>
<evidence type="ECO:0000269" key="9">
    <source>
    </source>
</evidence>
<evidence type="ECO:0000269" key="10">
    <source>
    </source>
</evidence>
<evidence type="ECO:0000269" key="11">
    <source>
    </source>
</evidence>
<evidence type="ECO:0000269" key="12">
    <source>
    </source>
</evidence>
<evidence type="ECO:0000269" key="13">
    <source>
    </source>
</evidence>
<evidence type="ECO:0000269" key="14">
    <source>
    </source>
</evidence>
<evidence type="ECO:0000269" key="15">
    <source>
    </source>
</evidence>
<evidence type="ECO:0000269" key="16">
    <source>
    </source>
</evidence>
<evidence type="ECO:0000269" key="17">
    <source>
    </source>
</evidence>
<evidence type="ECO:0000269" key="18">
    <source>
    </source>
</evidence>
<evidence type="ECO:0000269" key="19">
    <source>
    </source>
</evidence>
<evidence type="ECO:0000269" key="20">
    <source>
    </source>
</evidence>
<evidence type="ECO:0000269" key="21">
    <source>
    </source>
</evidence>
<evidence type="ECO:0000269" key="22">
    <source>
    </source>
</evidence>
<evidence type="ECO:0000269" key="23">
    <source>
    </source>
</evidence>
<evidence type="ECO:0000269" key="24">
    <source>
    </source>
</evidence>
<evidence type="ECO:0000269" key="25">
    <source>
    </source>
</evidence>
<evidence type="ECO:0000269" key="26">
    <source>
    </source>
</evidence>
<evidence type="ECO:0000269" key="27">
    <source>
    </source>
</evidence>
<evidence type="ECO:0000269" key="28">
    <source>
    </source>
</evidence>
<evidence type="ECO:0000269" key="29">
    <source ref="5"/>
</evidence>
<evidence type="ECO:0000305" key="30"/>
<evidence type="ECO:0000305" key="31">
    <source>
    </source>
</evidence>
<evidence type="ECO:0000305" key="32">
    <source>
    </source>
</evidence>
<evidence type="ECO:0007744" key="33">
    <source>
    </source>
</evidence>
<evidence type="ECO:0007829" key="34">
    <source>
        <dbReference type="PDB" id="4GGC"/>
    </source>
</evidence>
<evidence type="ECO:0007829" key="35">
    <source>
        <dbReference type="PDB" id="6Q6G"/>
    </source>
</evidence>
<evidence type="ECO:0007829" key="36">
    <source>
        <dbReference type="PDB" id="6Q6H"/>
    </source>
</evidence>
<organism>
    <name type="scientific">Homo sapiens</name>
    <name type="common">Human</name>
    <dbReference type="NCBI Taxonomy" id="9606"/>
    <lineage>
        <taxon>Eukaryota</taxon>
        <taxon>Metazoa</taxon>
        <taxon>Chordata</taxon>
        <taxon>Craniata</taxon>
        <taxon>Vertebrata</taxon>
        <taxon>Euteleostomi</taxon>
        <taxon>Mammalia</taxon>
        <taxon>Eutheria</taxon>
        <taxon>Euarchontoglires</taxon>
        <taxon>Primates</taxon>
        <taxon>Haplorrhini</taxon>
        <taxon>Catarrhini</taxon>
        <taxon>Hominidae</taxon>
        <taxon>Homo</taxon>
    </lineage>
</organism>
<reference key="1">
    <citation type="journal article" date="1994" name="Mol. Cell. Biol.">
        <title>A novel mammalian protein, p55CDC, present in dividing cells is associated with protein kinase activity and has homology to the Saccharomyces cerevisiae cell division cycle proteins Cdc20 and Cdc4.</title>
        <authorList>
            <person name="Weinstein J."/>
            <person name="Jacobsen F.W."/>
            <person name="Hsu-Chen J."/>
            <person name="Wu T."/>
            <person name="Baum L.G."/>
        </authorList>
    </citation>
    <scope>NUCLEOTIDE SEQUENCE [MRNA]</scope>
</reference>
<reference key="2">
    <citation type="journal article" date="1998" name="Curr. Biol.">
        <title>Activation of the human anaphase-promoting complex by proteins of the CDC20/Fizzy family.</title>
        <authorList>
            <person name="Kramer E.R."/>
            <person name="Gieffers C."/>
            <person name="Hoelzl G."/>
            <person name="Hengstschlaeger M."/>
            <person name="Peters J.-M."/>
        </authorList>
    </citation>
    <scope>NUCLEOTIDE SEQUENCE [MRNA]</scope>
    <scope>FUNCTION</scope>
    <scope>INTERACTION WITH MAD2L1 AND APC/C</scope>
    <source>
        <tissue>Liver</tissue>
        <tissue>Spleen</tissue>
    </source>
</reference>
<reference key="3">
    <citation type="journal article" date="2004" name="Nat. Genet.">
        <title>Complete sequencing and characterization of 21,243 full-length human cDNAs.</title>
        <authorList>
            <person name="Ota T."/>
            <person name="Suzuki Y."/>
            <person name="Nishikawa T."/>
            <person name="Otsuki T."/>
            <person name="Sugiyama T."/>
            <person name="Irie R."/>
            <person name="Wakamatsu A."/>
            <person name="Hayashi K."/>
            <person name="Sato H."/>
            <person name="Nagai K."/>
            <person name="Kimura K."/>
            <person name="Makita H."/>
            <person name="Sekine M."/>
            <person name="Obayashi M."/>
            <person name="Nishi T."/>
            <person name="Shibahara T."/>
            <person name="Tanaka T."/>
            <person name="Ishii S."/>
            <person name="Yamamoto J."/>
            <person name="Saito K."/>
            <person name="Kawai Y."/>
            <person name="Isono Y."/>
            <person name="Nakamura Y."/>
            <person name="Nagahari K."/>
            <person name="Murakami K."/>
            <person name="Yasuda T."/>
            <person name="Iwayanagi T."/>
            <person name="Wagatsuma M."/>
            <person name="Shiratori A."/>
            <person name="Sudo H."/>
            <person name="Hosoiri T."/>
            <person name="Kaku Y."/>
            <person name="Kodaira H."/>
            <person name="Kondo H."/>
            <person name="Sugawara M."/>
            <person name="Takahashi M."/>
            <person name="Kanda K."/>
            <person name="Yokoi T."/>
            <person name="Furuya T."/>
            <person name="Kikkawa E."/>
            <person name="Omura Y."/>
            <person name="Abe K."/>
            <person name="Kamihara K."/>
            <person name="Katsuta N."/>
            <person name="Sato K."/>
            <person name="Tanikawa M."/>
            <person name="Yamazaki M."/>
            <person name="Ninomiya K."/>
            <person name="Ishibashi T."/>
            <person name="Yamashita H."/>
            <person name="Murakawa K."/>
            <person name="Fujimori K."/>
            <person name="Tanai H."/>
            <person name="Kimata M."/>
            <person name="Watanabe M."/>
            <person name="Hiraoka S."/>
            <person name="Chiba Y."/>
            <person name="Ishida S."/>
            <person name="Ono Y."/>
            <person name="Takiguchi S."/>
            <person name="Watanabe S."/>
            <person name="Yosida M."/>
            <person name="Hotuta T."/>
            <person name="Kusano J."/>
            <person name="Kanehori K."/>
            <person name="Takahashi-Fujii A."/>
            <person name="Hara H."/>
            <person name="Tanase T.-O."/>
            <person name="Nomura Y."/>
            <person name="Togiya S."/>
            <person name="Komai F."/>
            <person name="Hara R."/>
            <person name="Takeuchi K."/>
            <person name="Arita M."/>
            <person name="Imose N."/>
            <person name="Musashino K."/>
            <person name="Yuuki H."/>
            <person name="Oshima A."/>
            <person name="Sasaki N."/>
            <person name="Aotsuka S."/>
            <person name="Yoshikawa Y."/>
            <person name="Matsunawa H."/>
            <person name="Ichihara T."/>
            <person name="Shiohata N."/>
            <person name="Sano S."/>
            <person name="Moriya S."/>
            <person name="Momiyama H."/>
            <person name="Satoh N."/>
            <person name="Takami S."/>
            <person name="Terashima Y."/>
            <person name="Suzuki O."/>
            <person name="Nakagawa S."/>
            <person name="Senoh A."/>
            <person name="Mizoguchi H."/>
            <person name="Goto Y."/>
            <person name="Shimizu F."/>
            <person name="Wakebe H."/>
            <person name="Hishigaki H."/>
            <person name="Watanabe T."/>
            <person name="Sugiyama A."/>
            <person name="Takemoto M."/>
            <person name="Kawakami B."/>
            <person name="Yamazaki M."/>
            <person name="Watanabe K."/>
            <person name="Kumagai A."/>
            <person name="Itakura S."/>
            <person name="Fukuzumi Y."/>
            <person name="Fujimori Y."/>
            <person name="Komiyama M."/>
            <person name="Tashiro H."/>
            <person name="Tanigami A."/>
            <person name="Fujiwara T."/>
            <person name="Ono T."/>
            <person name="Yamada K."/>
            <person name="Fujii Y."/>
            <person name="Ozaki K."/>
            <person name="Hirao M."/>
            <person name="Ohmori Y."/>
            <person name="Kawabata A."/>
            <person name="Hikiji T."/>
            <person name="Kobatake N."/>
            <person name="Inagaki H."/>
            <person name="Ikema Y."/>
            <person name="Okamoto S."/>
            <person name="Okitani R."/>
            <person name="Kawakami T."/>
            <person name="Noguchi S."/>
            <person name="Itoh T."/>
            <person name="Shigeta K."/>
            <person name="Senba T."/>
            <person name="Matsumura K."/>
            <person name="Nakajima Y."/>
            <person name="Mizuno T."/>
            <person name="Morinaga M."/>
            <person name="Sasaki M."/>
            <person name="Togashi T."/>
            <person name="Oyama M."/>
            <person name="Hata H."/>
            <person name="Watanabe M."/>
            <person name="Komatsu T."/>
            <person name="Mizushima-Sugano J."/>
            <person name="Satoh T."/>
            <person name="Shirai Y."/>
            <person name="Takahashi Y."/>
            <person name="Nakagawa K."/>
            <person name="Okumura K."/>
            <person name="Nagase T."/>
            <person name="Nomura N."/>
            <person name="Kikuchi H."/>
            <person name="Masuho Y."/>
            <person name="Yamashita R."/>
            <person name="Nakai K."/>
            <person name="Yada T."/>
            <person name="Nakamura Y."/>
            <person name="Ohara O."/>
            <person name="Isogai T."/>
            <person name="Sugano S."/>
        </authorList>
    </citation>
    <scope>NUCLEOTIDE SEQUENCE [LARGE SCALE MRNA]</scope>
    <source>
        <tissue>Testis</tissue>
    </source>
</reference>
<reference key="4">
    <citation type="submission" date="2003-05" db="EMBL/GenBank/DDBJ databases">
        <title>Cloning of human full-length CDSs in BD Creator(TM) system donor vector.</title>
        <authorList>
            <person name="Kalnine N."/>
            <person name="Chen X."/>
            <person name="Rolfs A."/>
            <person name="Halleck A."/>
            <person name="Hines L."/>
            <person name="Eisenstein S."/>
            <person name="Koundinya M."/>
            <person name="Raphael J."/>
            <person name="Moreira D."/>
            <person name="Kelley T."/>
            <person name="LaBaer J."/>
            <person name="Lin Y."/>
            <person name="Phelan M."/>
            <person name="Farmer A."/>
        </authorList>
    </citation>
    <scope>NUCLEOTIDE SEQUENCE [LARGE SCALE MRNA]</scope>
</reference>
<reference key="5">
    <citation type="submission" date="2006-04" db="EMBL/GenBank/DDBJ databases">
        <authorList>
            <consortium name="NIEHS SNPs program"/>
        </authorList>
    </citation>
    <scope>NUCLEOTIDE SEQUENCE [GENOMIC DNA]</scope>
    <scope>VARIANTS MET-402 AND GLN-479</scope>
</reference>
<reference key="6">
    <citation type="journal article" date="2006" name="Nature">
        <title>The DNA sequence and biological annotation of human chromosome 1.</title>
        <authorList>
            <person name="Gregory S.G."/>
            <person name="Barlow K.F."/>
            <person name="McLay K.E."/>
            <person name="Kaul R."/>
            <person name="Swarbreck D."/>
            <person name="Dunham A."/>
            <person name="Scott C.E."/>
            <person name="Howe K.L."/>
            <person name="Woodfine K."/>
            <person name="Spencer C.C.A."/>
            <person name="Jones M.C."/>
            <person name="Gillson C."/>
            <person name="Searle S."/>
            <person name="Zhou Y."/>
            <person name="Kokocinski F."/>
            <person name="McDonald L."/>
            <person name="Evans R."/>
            <person name="Phillips K."/>
            <person name="Atkinson A."/>
            <person name="Cooper R."/>
            <person name="Jones C."/>
            <person name="Hall R.E."/>
            <person name="Andrews T.D."/>
            <person name="Lloyd C."/>
            <person name="Ainscough R."/>
            <person name="Almeida J.P."/>
            <person name="Ambrose K.D."/>
            <person name="Anderson F."/>
            <person name="Andrew R.W."/>
            <person name="Ashwell R.I.S."/>
            <person name="Aubin K."/>
            <person name="Babbage A.K."/>
            <person name="Bagguley C.L."/>
            <person name="Bailey J."/>
            <person name="Beasley H."/>
            <person name="Bethel G."/>
            <person name="Bird C.P."/>
            <person name="Bray-Allen S."/>
            <person name="Brown J.Y."/>
            <person name="Brown A.J."/>
            <person name="Buckley D."/>
            <person name="Burton J."/>
            <person name="Bye J."/>
            <person name="Carder C."/>
            <person name="Chapman J.C."/>
            <person name="Clark S.Y."/>
            <person name="Clarke G."/>
            <person name="Clee C."/>
            <person name="Cobley V."/>
            <person name="Collier R.E."/>
            <person name="Corby N."/>
            <person name="Coville G.J."/>
            <person name="Davies J."/>
            <person name="Deadman R."/>
            <person name="Dunn M."/>
            <person name="Earthrowl M."/>
            <person name="Ellington A.G."/>
            <person name="Errington H."/>
            <person name="Frankish A."/>
            <person name="Frankland J."/>
            <person name="French L."/>
            <person name="Garner P."/>
            <person name="Garnett J."/>
            <person name="Gay L."/>
            <person name="Ghori M.R.J."/>
            <person name="Gibson R."/>
            <person name="Gilby L.M."/>
            <person name="Gillett W."/>
            <person name="Glithero R.J."/>
            <person name="Grafham D.V."/>
            <person name="Griffiths C."/>
            <person name="Griffiths-Jones S."/>
            <person name="Grocock R."/>
            <person name="Hammond S."/>
            <person name="Harrison E.S.I."/>
            <person name="Hart E."/>
            <person name="Haugen E."/>
            <person name="Heath P.D."/>
            <person name="Holmes S."/>
            <person name="Holt K."/>
            <person name="Howden P.J."/>
            <person name="Hunt A.R."/>
            <person name="Hunt S.E."/>
            <person name="Hunter G."/>
            <person name="Isherwood J."/>
            <person name="James R."/>
            <person name="Johnson C."/>
            <person name="Johnson D."/>
            <person name="Joy A."/>
            <person name="Kay M."/>
            <person name="Kershaw J.K."/>
            <person name="Kibukawa M."/>
            <person name="Kimberley A.M."/>
            <person name="King A."/>
            <person name="Knights A.J."/>
            <person name="Lad H."/>
            <person name="Laird G."/>
            <person name="Lawlor S."/>
            <person name="Leongamornlert D.A."/>
            <person name="Lloyd D.M."/>
            <person name="Loveland J."/>
            <person name="Lovell J."/>
            <person name="Lush M.J."/>
            <person name="Lyne R."/>
            <person name="Martin S."/>
            <person name="Mashreghi-Mohammadi M."/>
            <person name="Matthews L."/>
            <person name="Matthews N.S.W."/>
            <person name="McLaren S."/>
            <person name="Milne S."/>
            <person name="Mistry S."/>
            <person name="Moore M.J.F."/>
            <person name="Nickerson T."/>
            <person name="O'Dell C.N."/>
            <person name="Oliver K."/>
            <person name="Palmeiri A."/>
            <person name="Palmer S.A."/>
            <person name="Parker A."/>
            <person name="Patel D."/>
            <person name="Pearce A.V."/>
            <person name="Peck A.I."/>
            <person name="Pelan S."/>
            <person name="Phelps K."/>
            <person name="Phillimore B.J."/>
            <person name="Plumb R."/>
            <person name="Rajan J."/>
            <person name="Raymond C."/>
            <person name="Rouse G."/>
            <person name="Saenphimmachak C."/>
            <person name="Sehra H.K."/>
            <person name="Sheridan E."/>
            <person name="Shownkeen R."/>
            <person name="Sims S."/>
            <person name="Skuce C.D."/>
            <person name="Smith M."/>
            <person name="Steward C."/>
            <person name="Subramanian S."/>
            <person name="Sycamore N."/>
            <person name="Tracey A."/>
            <person name="Tromans A."/>
            <person name="Van Helmond Z."/>
            <person name="Wall M."/>
            <person name="Wallis J.M."/>
            <person name="White S."/>
            <person name="Whitehead S.L."/>
            <person name="Wilkinson J.E."/>
            <person name="Willey D.L."/>
            <person name="Williams H."/>
            <person name="Wilming L."/>
            <person name="Wray P.W."/>
            <person name="Wu Z."/>
            <person name="Coulson A."/>
            <person name="Vaudin M."/>
            <person name="Sulston J.E."/>
            <person name="Durbin R.M."/>
            <person name="Hubbard T."/>
            <person name="Wooster R."/>
            <person name="Dunham I."/>
            <person name="Carter N.P."/>
            <person name="McVean G."/>
            <person name="Ross M.T."/>
            <person name="Harrow J."/>
            <person name="Olson M.V."/>
            <person name="Beck S."/>
            <person name="Rogers J."/>
            <person name="Bentley D.R."/>
        </authorList>
    </citation>
    <scope>NUCLEOTIDE SEQUENCE [LARGE SCALE GENOMIC DNA]</scope>
</reference>
<reference key="7">
    <citation type="submission" date="2005-09" db="EMBL/GenBank/DDBJ databases">
        <authorList>
            <person name="Mural R.J."/>
            <person name="Istrail S."/>
            <person name="Sutton G.G."/>
            <person name="Florea L."/>
            <person name="Halpern A.L."/>
            <person name="Mobarry C.M."/>
            <person name="Lippert R."/>
            <person name="Walenz B."/>
            <person name="Shatkay H."/>
            <person name="Dew I."/>
            <person name="Miller J.R."/>
            <person name="Flanigan M.J."/>
            <person name="Edwards N.J."/>
            <person name="Bolanos R."/>
            <person name="Fasulo D."/>
            <person name="Halldorsson B.V."/>
            <person name="Hannenhalli S."/>
            <person name="Turner R."/>
            <person name="Yooseph S."/>
            <person name="Lu F."/>
            <person name="Nusskern D.R."/>
            <person name="Shue B.C."/>
            <person name="Zheng X.H."/>
            <person name="Zhong F."/>
            <person name="Delcher A.L."/>
            <person name="Huson D.H."/>
            <person name="Kravitz S.A."/>
            <person name="Mouchard L."/>
            <person name="Reinert K."/>
            <person name="Remington K.A."/>
            <person name="Clark A.G."/>
            <person name="Waterman M.S."/>
            <person name="Eichler E.E."/>
            <person name="Adams M.D."/>
            <person name="Hunkapiller M.W."/>
            <person name="Myers E.W."/>
            <person name="Venter J.C."/>
        </authorList>
    </citation>
    <scope>NUCLEOTIDE SEQUENCE [LARGE SCALE GENOMIC DNA]</scope>
</reference>
<reference key="8">
    <citation type="journal article" date="2004" name="Genome Res.">
        <title>The status, quality, and expansion of the NIH full-length cDNA project: the Mammalian Gene Collection (MGC).</title>
        <authorList>
            <consortium name="The MGC Project Team"/>
        </authorList>
    </citation>
    <scope>NUCLEOTIDE SEQUENCE [LARGE SCALE MRNA]</scope>
    <source>
        <tissue>Colon</tissue>
        <tissue>Colon adenocarcinoma</tissue>
        <tissue>Lymph</tissue>
        <tissue>Muscle</tissue>
        <tissue>Ovary</tissue>
        <tissue>Skin</tissue>
    </source>
</reference>
<reference key="9">
    <citation type="journal article" date="1998" name="Mol. Cell">
        <title>Direct binding of CDC20 protein family members activates the anaphase-promoting complex in mitosis and G1.</title>
        <authorList>
            <person name="Fang G."/>
            <person name="Yu H."/>
            <person name="Kirschner M.W."/>
        </authorList>
    </citation>
    <scope>FUNCTION</scope>
    <scope>INTERACTION WITH APC/C</scope>
</reference>
<reference key="10">
    <citation type="journal article" date="1998" name="Genes Dev.">
        <title>The checkpoint protein MAD2 and the mitotic regulator CDC20 form a ternary complex with the anaphase-promoting complex to control anaphase initiation.</title>
        <authorList>
            <person name="Fang G."/>
            <person name="Yu H."/>
            <person name="Kirschner M.W."/>
        </authorList>
    </citation>
    <scope>FUNCTION</scope>
    <scope>INTERACTION WITH MAD2L1 AND APC/C</scope>
</reference>
<reference key="11">
    <citation type="journal article" date="1999" name="J. Cell Biol.">
        <title>Regulation of APC activity by phosphorylation and regulatory factors.</title>
        <authorList>
            <person name="Kotani S."/>
            <person name="Tanaka H."/>
            <person name="Yasuda H."/>
            <person name="Todokoro K."/>
        </authorList>
    </citation>
    <scope>RETRACTED PAPER</scope>
</reference>
<reference key="12">
    <citation type="journal article" date="2005" name="J. Cell Biol.">
        <authorList>
            <person name="Tanaka H."/>
            <person name="Yasuda H."/>
            <person name="Todokoro K."/>
        </authorList>
    </citation>
    <scope>RETRACTION NOTICE OF PUBMED:10459014</scope>
</reference>
<reference key="13">
    <citation type="journal article" date="2001" name="Genes Dev.">
        <title>MAD2B is an inhibitor of the anaphase-promoting complex.</title>
        <authorList>
            <person name="Chen J."/>
            <person name="Fang G."/>
        </authorList>
    </citation>
    <scope>INTERACTION WITH MAD2L2</scope>
</reference>
<reference key="14">
    <citation type="journal article" date="2003" name="EMBO J.">
        <title>Mitotic regulation of the human anaphase-promoting complex by phosphorylation.</title>
        <authorList>
            <person name="Kraft C."/>
            <person name="Herzog F."/>
            <person name="Gieffers C."/>
            <person name="Mechtler K."/>
            <person name="Hagting A."/>
            <person name="Pines J."/>
            <person name="Peters J.-M."/>
        </authorList>
    </citation>
    <scope>PHOSPHORYLATION AT THR-70 AND THR-106</scope>
</reference>
<reference key="15">
    <citation type="journal article" date="2004" name="Mol. Cell">
        <title>Phosphorylation of Cdc20 by Bub1 provides a catalytic mechanism for APC/C inhibition by the spindle checkpoint.</title>
        <authorList>
            <person name="Tang Z."/>
            <person name="Shu H."/>
            <person name="Oncel D."/>
            <person name="Chen S."/>
            <person name="Yu H."/>
        </authorList>
    </citation>
    <scope>PHOSPHORYLATION AT SER-41; SER-72; SER-92; SER-153; THR-157 AND SER-161</scope>
    <scope>IDENTIFICATION BY MASS SPECTROMETRY</scope>
    <scope>INTERACTION WITH BUB1B AND MAD2L1</scope>
    <scope>MUTAGENESIS OF SER-41; SER-72; SER-92; SER-153; THR-157 AND SER-161</scope>
</reference>
<reference key="16">
    <citation type="journal article" date="2007" name="J. Biol. Chem.">
        <title>Cell cycle-dependent expression of centrosomal ninein-like protein in human cells is regulated by the anaphase-promoting complex.</title>
        <authorList>
            <person name="Wang Y."/>
            <person name="Zhan Q."/>
        </authorList>
    </citation>
    <scope>INTERACTION WITH NINL</scope>
</reference>
<reference key="17">
    <citation type="journal article" date="2007" name="Nature">
        <title>Anaphase initiation is regulated by antagonistic ubiquitination and deubiquitination activities.</title>
        <authorList>
            <person name="Stegmeier F."/>
            <person name="Rape M."/>
            <person name="Draviam V.M."/>
            <person name="Nalepa G."/>
            <person name="Sowa M.E."/>
            <person name="Ang X.L."/>
            <person name="McDonald E.R. III"/>
            <person name="Li M.Z."/>
            <person name="Hannon G.J."/>
            <person name="Sorger P.K."/>
            <person name="Kirschner M.W."/>
            <person name="Harper J.W."/>
            <person name="Elledge S.J."/>
        </authorList>
    </citation>
    <scope>UBIQUITINATION</scope>
    <scope>DEUBIQUITINATION BY USP44</scope>
</reference>
<reference key="18">
    <citation type="journal article" date="2008" name="Cancer Res.">
        <title>HSF1 as a mitotic regulator: phosphorylation of HSF1 by Plk1 is essential for mitotic progression.</title>
        <authorList>
            <person name="Lee Y.J."/>
            <person name="Kim E.H."/>
            <person name="Lee J.S."/>
            <person name="Jeoung D."/>
            <person name="Bae S."/>
            <person name="Kwon S.H."/>
            <person name="Lee Y.S."/>
        </authorList>
    </citation>
    <scope>INTERACTION WITH HSF1</scope>
</reference>
<reference key="19">
    <citation type="journal article" date="2008" name="Nat. Cell Biol.">
        <title>The APC/C maintains the spindle assembly checkpoint by targeting Cdc20 for destruction.</title>
        <authorList>
            <person name="Nilsson J."/>
            <person name="Yekezare M."/>
            <person name="Minshull J."/>
            <person name="Pines J."/>
        </authorList>
    </citation>
    <scope>UBIQUITINATION</scope>
    <scope>INTERACTION WITH BUB1B</scope>
    <scope>DEGRADATION BY THE PROTEASOME</scope>
</reference>
<reference key="20">
    <citation type="journal article" date="2008" name="Proc. Natl. Acad. Sci. U.S.A.">
        <title>A quantitative atlas of mitotic phosphorylation.</title>
        <authorList>
            <person name="Dephoure N."/>
            <person name="Zhou C."/>
            <person name="Villen J."/>
            <person name="Beausoleil S.A."/>
            <person name="Bakalarski C.E."/>
            <person name="Elledge S.J."/>
            <person name="Gygi S.P."/>
        </authorList>
    </citation>
    <scope>IDENTIFICATION BY MASS SPECTROMETRY [LARGE SCALE ANALYSIS]</scope>
    <source>
        <tissue>Cervix carcinoma</tissue>
    </source>
</reference>
<reference key="21">
    <citation type="journal article" date="2009" name="Cell Cycle">
        <title>APC/C- and Mad2-mediated degradation of Cdc20 during spindle checkpoint activation.</title>
        <authorList>
            <person name="Ge S."/>
            <person name="Skaar J.R."/>
            <person name="Pagano M."/>
        </authorList>
    </citation>
    <scope>UBIQUITINATION</scope>
    <scope>INTERACTION WITH MAD2L1 AND BUB1B</scope>
    <scope>DEGRADATION BY THE PROTEASOME</scope>
    <scope>MUTAGENESIS OF ARG-132</scope>
</reference>
<reference key="22">
    <citation type="journal article" date="2009" name="Cell Cycle">
        <title>CDK5RAP2 is required for spindle checkpoint function.</title>
        <authorList>
            <person name="Zhang X."/>
            <person name="Liu D."/>
            <person name="Lv S."/>
            <person name="Wang H."/>
            <person name="Zhong X."/>
            <person name="Liu B."/>
            <person name="Wang B."/>
            <person name="Liao J."/>
            <person name="Li J."/>
            <person name="Pfeifer G.P."/>
            <person name="Xu X."/>
        </authorList>
    </citation>
    <scope>INTERACTION WITH CDK5RAP2</scope>
</reference>
<reference key="23">
    <citation type="journal article" date="2010" name="Exp. Mol. Pathol.">
        <title>Nek2 targets the mitotic checkpoint proteins Mad2 and Cdc20: a mechanism for aneuploidy in cancer.</title>
        <authorList>
            <person name="Liu Q."/>
            <person name="Hirohashi Y."/>
            <person name="Du X."/>
            <person name="Greene M.I."/>
            <person name="Wang Q."/>
        </authorList>
    </citation>
    <scope>SUBCELLULAR LOCATION</scope>
    <scope>PHOSPHORYLATION</scope>
    <scope>INTERACTION WITH NEK2</scope>
</reference>
<reference key="24">
    <citation type="journal article" date="2011" name="BMC Syst. Biol.">
        <title>Initial characterization of the human central proteome.</title>
        <authorList>
            <person name="Burkard T.R."/>
            <person name="Planyavsky M."/>
            <person name="Kaupe I."/>
            <person name="Breitwieser F.P."/>
            <person name="Buerckstuemmer T."/>
            <person name="Bennett K.L."/>
            <person name="Superti-Furga G."/>
            <person name="Colinge J."/>
        </authorList>
    </citation>
    <scope>IDENTIFICATION BY MASS SPECTROMETRY [LARGE SCALE ANALYSIS]</scope>
</reference>
<reference key="25">
    <citation type="journal article" date="2011" name="Nat. Cell Biol.">
        <title>APC15 drives the turnover of MCC-CDC20 to make the spindle assembly checkpoint responsive to kinetochore attachment.</title>
        <authorList>
            <person name="Mansfeld J."/>
            <person name="Collin P."/>
            <person name="Collins M.O."/>
            <person name="Choudhary J.S."/>
            <person name="Pines J."/>
        </authorList>
    </citation>
    <scope>UBIQUITINATION AT LYS-485 AND LYS-490</scope>
    <scope>MUTAGENESIS OF LYS-485 AND LYS-490</scope>
</reference>
<reference key="26">
    <citation type="journal article" date="2011" name="Cancer Cell">
        <title>SIRT2 maintains genome integrity and suppresses tumorigenesis through regulating APC/C activity.</title>
        <authorList>
            <person name="Kim H.S."/>
            <person name="Vassilopoulos A."/>
            <person name="Wang R.H."/>
            <person name="Lahusen T."/>
            <person name="Xiao Z."/>
            <person name="Xu X."/>
            <person name="Li C."/>
            <person name="Veenstra T.D."/>
            <person name="Li B."/>
            <person name="Yu H."/>
            <person name="Ji J."/>
            <person name="Wang X.W."/>
            <person name="Park S.H."/>
            <person name="Cha Y.I."/>
            <person name="Gius D."/>
            <person name="Deng C.X."/>
        </authorList>
    </citation>
    <scope>ACETYLATION AT LYS-66</scope>
    <scope>DEACETYLATION AT LYS-66 BY SIRT2</scope>
    <scope>INTERACTION WITH SIRT2</scope>
</reference>
<reference key="27">
    <citation type="journal article" date="2012" name="Nat. Commun.">
        <title>Fcp1-dependent dephosphorylation is required for M-phase-promoting factor inactivation at mitosis exit.</title>
        <authorList>
            <person name="Visconti R."/>
            <person name="Palazzo L."/>
            <person name="Della Monica R."/>
            <person name="Grieco D."/>
        </authorList>
    </citation>
    <scope>DEPHOSPHORYLATION</scope>
</reference>
<reference key="28">
    <citation type="journal article" date="2013" name="J. Proteome Res.">
        <title>Toward a comprehensive characterization of a human cancer cell phosphoproteome.</title>
        <authorList>
            <person name="Zhou H."/>
            <person name="Di Palma S."/>
            <person name="Preisinger C."/>
            <person name="Peng M."/>
            <person name="Polat A.N."/>
            <person name="Heck A.J."/>
            <person name="Mohammed S."/>
        </authorList>
    </citation>
    <scope>PHOSPHORYLATION [LARGE SCALE ANALYSIS] AT SER-41 AND THR-70</scope>
    <scope>IDENTIFICATION BY MASS SPECTROMETRY [LARGE SCALE ANALYSIS]</scope>
    <source>
        <tissue>Cervix carcinoma</tissue>
        <tissue>Erythroleukemia</tissue>
    </source>
</reference>
<reference key="29">
    <citation type="journal article" date="2015" name="Cell Discov.">
        <title>Ubiquitin-specific protease 22 is a deubiquitinase of CCNB1.</title>
        <authorList>
            <person name="Lin Z."/>
            <person name="Tan C."/>
            <person name="Qiu Q."/>
            <person name="Kong S."/>
            <person name="Yang H."/>
            <person name="Zhao F."/>
            <person name="Liu Z."/>
            <person name="Li J."/>
            <person name="Kong Q."/>
            <person name="Gao B."/>
            <person name="Barrett T."/>
            <person name="Yang G.Y."/>
            <person name="Zhang J."/>
            <person name="Fang D."/>
        </authorList>
    </citation>
    <scope>FUNCTION</scope>
    <scope>INTERACTION WITH USP22</scope>
</reference>
<reference key="30">
    <citation type="journal article" date="2016" name="Cell Rep.">
        <title>APC/C and SCF(cyclin F) Constitute a Reciprocal Feedback Circuit Controlling S-Phase Entry.</title>
        <authorList>
            <person name="Choudhury R."/>
            <person name="Bonacci T."/>
            <person name="Arceci A."/>
            <person name="Lahiri D."/>
            <person name="Mills C.A."/>
            <person name="Kernan J.L."/>
            <person name="Branigan T.B."/>
            <person name="DeCaprio J.A."/>
            <person name="Burke D.J."/>
            <person name="Emanuele M.J."/>
        </authorList>
    </citation>
    <scope>INTERACTION WITH CCNF</scope>
</reference>
<reference key="31">
    <citation type="journal article" date="2018" name="J. Biol. Chem.">
        <title>Direct interactions of mitotic arrest deficient 1 (MAD1) domains with each other and MAD2 conformers are required for mitotic checkpoint signaling.</title>
        <authorList>
            <person name="Ji W."/>
            <person name="Luo Y."/>
            <person name="Ahmad E."/>
            <person name="Liu S.T."/>
        </authorList>
    </citation>
    <scope>INTERACTION WITH MAD2L1</scope>
</reference>
<reference key="32">
    <citation type="journal article" date="2018" name="Proc. Natl. Acad. Sci. U.S.A.">
        <title>Degradation of FBXO31 by APC/C is regulated by AKT- and ATM-mediated phosphorylation.</title>
        <authorList>
            <person name="Choppara S."/>
            <person name="Malonia S.K."/>
            <person name="Sankaran G."/>
            <person name="Green M.R."/>
            <person name="Santra M.K."/>
        </authorList>
    </citation>
    <scope>FUNCTION</scope>
</reference>
<reference key="33">
    <citation type="journal article" date="2022" name="Proc. Natl. Acad. Sci. U.S.A.">
        <title>Role of ubiquitin-protein ligase UBR5 in the disassembly of mitotic checkpoint complexes.</title>
        <authorList>
            <person name="Kaisari S."/>
            <person name="Miniowitz-Shemtov S."/>
            <person name="Sitry-Shevah D."/>
            <person name="Shomer P."/>
            <person name="Kozlov G."/>
            <person name="Gehring K."/>
            <person name="Hershko A."/>
        </authorList>
    </citation>
    <scope>UBIQUITINATION</scope>
</reference>
<reference key="34">
    <citation type="journal article" date="2023" name="Cell">
        <title>Orphan quality control shapes network dynamics and gene expression.</title>
        <authorList>
            <person name="Mark K.G."/>
            <person name="Kolla S."/>
            <person name="Aguirre J.D."/>
            <person name="Garshott D.M."/>
            <person name="Schmitt S."/>
            <person name="Haakonsen D.L."/>
            <person name="Xu C."/>
            <person name="Kater L."/>
            <person name="Kempf G."/>
            <person name="Martinez-Gonzalez B."/>
            <person name="Akopian D."/>
            <person name="See S.K."/>
            <person name="Thomae N.H."/>
            <person name="Rape M."/>
        </authorList>
    </citation>
    <scope>UBIQUITINATION</scope>
</reference>
<reference key="35">
    <citation type="journal article" date="2020" name="Protein Cell">
        <title>Biallelic mutations in CDC20 cause female infertility characterized by abnormalities in oocyte maturation and early embryonic development.</title>
        <authorList>
            <person name="Zhao L."/>
            <person name="Xue S."/>
            <person name="Yao Z."/>
            <person name="Shi J."/>
            <person name="Chen B."/>
            <person name="Wu L."/>
            <person name="Sun L."/>
            <person name="Xu Y."/>
            <person name="Yan Z."/>
            <person name="Li B."/>
            <person name="Mao X."/>
            <person name="Fu J."/>
            <person name="Zhang Z."/>
            <person name="Mu J."/>
            <person name="Wang W."/>
            <person name="Du J."/>
            <person name="Liu S."/>
            <person name="Dong J."/>
            <person name="Wang W."/>
            <person name="Li Q."/>
            <person name="He L."/>
            <person name="Jin L."/>
            <person name="Liang X."/>
            <person name="Kuang Y."/>
            <person name="Sun X."/>
            <person name="Wang L."/>
            <person name="Sang Q."/>
        </authorList>
    </citation>
    <scope>INVOLVEMENT IN OZEMA14</scope>
    <scope>VARIANTS OZEMA14 182-ARG--ARG-499 DEL; CYS-228; GLN-322 AND ARG-439</scope>
    <scope>CHARACTERIZATION OF VARIANTS OZEMA14 182-ARG--ARG-499 DEL; CYS-228; GLN-322 AND ARG-439</scope>
    <scope>SUBCELLULAR LOCATION</scope>
    <scope>FUNCTION</scope>
</reference>
<reference key="36">
    <citation type="journal article" date="2020" name="Aging Cell">
        <title>Premature aging syndrome showing random chromosome number instabilities with CDC20 mutation.</title>
        <authorList>
            <person name="Fujita H."/>
            <person name="Sasaki T."/>
            <person name="Miyamoto T."/>
            <person name="Akutsu S.N."/>
            <person name="Sato S."/>
            <person name="Mori T."/>
            <person name="Nakabayashi K."/>
            <person name="Hata K."/>
            <person name="Suzuki H."/>
            <person name="Kosaki K."/>
            <person name="Matsuura S."/>
            <person name="Matsubara Y."/>
            <person name="Amagai M."/>
            <person name="Kubo A."/>
        </authorList>
    </citation>
    <scope>VARIANT SER-286</scope>
    <scope>INTERACTION WITH BUB1B</scope>
    <scope>SUBCELLULAR LOCATION</scope>
    <scope>CHARACTERIZATION OF VARIANT SER-286</scope>
</reference>
<reference key="37">
    <citation type="journal article" date="2021" name="Front. Cell Dev. Biol.">
        <title>Identification of novel mutations in CDC20: Expanding the mutational spectrum for female infertility.</title>
        <authorList>
            <person name="Zhao L."/>
            <person name="Guan Y."/>
            <person name="Meng Q."/>
            <person name="Wang W."/>
            <person name="Wu L."/>
            <person name="Chen B."/>
            <person name="Hu J."/>
            <person name="Zhu J."/>
            <person name="Zhang Z."/>
            <person name="Mu J."/>
            <person name="Chen Y."/>
            <person name="Sun Y."/>
            <person name="Wu T."/>
            <person name="Wang W."/>
            <person name="Zhou Z."/>
            <person name="Dong J."/>
            <person name="Zeng Y."/>
            <person name="Liu R."/>
            <person name="Li Q."/>
            <person name="Du J."/>
            <person name="Kuang Y."/>
            <person name="Sang Q."/>
            <person name="Wang L."/>
        </authorList>
    </citation>
    <scope>VARIANTS OZEMA14 GLN-296; 322-ARG--ARG-499 DEL; GLN-322 AND CYS-385</scope>
    <scope>CHARACTERIZATION OF VARIANTS OZEMA14 GLN-296; 322-ARG--ARG-499 DEL; GLN-322 AND CYS-385</scope>
</reference>
<reference key="38">
    <citation type="journal article" date="2021" name="J. Assist. Reprod. Genet.">
        <title>The homozygous p.Tyr228Cys variant in CDC20 causes oocyte maturation arrest: an additional evidence supporting the causality between CDC20 mutation and female infertility.</title>
        <authorList>
            <person name="Xu Y."/>
            <person name="Zhu X."/>
            <person name="Wang M."/>
            <person name="Cai L."/>
            <person name="Ge Q."/>
            <person name="Fu Y."/>
            <person name="Jin L."/>
        </authorList>
    </citation>
    <scope>VARIANT OZEMA14 CYS-228</scope>
</reference>
<reference key="39">
    <citation type="journal article" date="2021" name="Reprod. Sci.">
        <title>Novel Mutations in CDC20 Are Associated with Female Infertility Due to Oocyte Maturation Abnormality and Early Embryonic Arrest.</title>
        <authorList>
            <person name="Huang L."/>
            <person name="Wang F."/>
            <person name="Kong S."/>
            <person name="Wang Y."/>
            <person name="Song G."/>
            <person name="Lu F."/>
            <person name="Ji J."/>
            <person name="Luo L."/>
            <person name="Tong X."/>
        </authorList>
    </citation>
    <scope>VARIANTS OZEMA14 THR-211 AND 262-ARG--ARG-499 DEL</scope>
</reference>
<sequence length="499" mass="54723">MAQFAFESDLHSLLQLDAPIPNAPPARWQRKAKEAAGPAPSPMRAANRSHSAGRTPGRTPGKSSSKVQTTPSKPGGDRYIPHRSAAQMEVASFLLSKENQPENSQTPTKKEHQKAWALNLNGFDVEEAKILRLSGKPQNAPEGYQNRLKVLYSQKATPGSSRKTCRYIPSLPDRILDAPEIRNDYYLNLVDWSSGNVLAVALDNSVYLWSASSGDILQLLQMEQPGEYISSVAWIKEGNYLAVGTSSAEVQLWDVQQQKRLRNMTSHSARVGSLSWNSYILSSGSRSGHIHHHDVRVAEHHVATLSGHSQEVCGLRWAPDGRHLASGGNDNLVNVWPSAPGEGGWVPLQTFTQHQGAVKAVAWCPWQSNVLATGGGTSDRHIRIWNVCSGACLSAVDAHSQVCSILWSPHYKELISGHGFAQNQLVIWKYPTMAKVAELKGHTSRVLSLTMSPDGATVASAAADETLRLWRCFELDPARRREREKASAAKSSLIHQGIR</sequence>